<accession>B7M7B0</accession>
<gene>
    <name evidence="1" type="primary">rimO</name>
    <name type="ordered locus">ECIAI1_0874</name>
</gene>
<reference key="1">
    <citation type="journal article" date="2009" name="PLoS Genet.">
        <title>Organised genome dynamics in the Escherichia coli species results in highly diverse adaptive paths.</title>
        <authorList>
            <person name="Touchon M."/>
            <person name="Hoede C."/>
            <person name="Tenaillon O."/>
            <person name="Barbe V."/>
            <person name="Baeriswyl S."/>
            <person name="Bidet P."/>
            <person name="Bingen E."/>
            <person name="Bonacorsi S."/>
            <person name="Bouchier C."/>
            <person name="Bouvet O."/>
            <person name="Calteau A."/>
            <person name="Chiapello H."/>
            <person name="Clermont O."/>
            <person name="Cruveiller S."/>
            <person name="Danchin A."/>
            <person name="Diard M."/>
            <person name="Dossat C."/>
            <person name="Karoui M.E."/>
            <person name="Frapy E."/>
            <person name="Garry L."/>
            <person name="Ghigo J.M."/>
            <person name="Gilles A.M."/>
            <person name="Johnson J."/>
            <person name="Le Bouguenec C."/>
            <person name="Lescat M."/>
            <person name="Mangenot S."/>
            <person name="Martinez-Jehanne V."/>
            <person name="Matic I."/>
            <person name="Nassif X."/>
            <person name="Oztas S."/>
            <person name="Petit M.A."/>
            <person name="Pichon C."/>
            <person name="Rouy Z."/>
            <person name="Ruf C.S."/>
            <person name="Schneider D."/>
            <person name="Tourret J."/>
            <person name="Vacherie B."/>
            <person name="Vallenet D."/>
            <person name="Medigue C."/>
            <person name="Rocha E.P.C."/>
            <person name="Denamur E."/>
        </authorList>
    </citation>
    <scope>NUCLEOTIDE SEQUENCE [LARGE SCALE GENOMIC DNA]</scope>
    <source>
        <strain>IAI1</strain>
    </source>
</reference>
<evidence type="ECO:0000255" key="1">
    <source>
        <dbReference type="HAMAP-Rule" id="MF_01865"/>
    </source>
</evidence>
<evidence type="ECO:0000255" key="2">
    <source>
        <dbReference type="PROSITE-ProRule" id="PRU01266"/>
    </source>
</evidence>
<protein>
    <recommendedName>
        <fullName evidence="1">Ribosomal protein uS12 methylthiotransferase RimO</fullName>
        <shortName evidence="1">uS12 MTTase</shortName>
        <shortName evidence="1">uS12 methylthiotransferase</shortName>
        <ecNumber evidence="1">2.8.4.4</ecNumber>
    </recommendedName>
    <alternativeName>
        <fullName evidence="1">Ribosomal protein uS12 (aspartate-C(3))-methylthiotransferase</fullName>
    </alternativeName>
    <alternativeName>
        <fullName evidence="1">Ribosome maturation factor RimO</fullName>
    </alternativeName>
</protein>
<dbReference type="EC" id="2.8.4.4" evidence="1"/>
<dbReference type="EMBL" id="CU928160">
    <property type="protein sequence ID" value="CAQ97739.1"/>
    <property type="molecule type" value="Genomic_DNA"/>
</dbReference>
<dbReference type="RefSeq" id="WP_000049367.1">
    <property type="nucleotide sequence ID" value="NC_011741.1"/>
</dbReference>
<dbReference type="SMR" id="B7M7B0"/>
<dbReference type="GeneID" id="75204700"/>
<dbReference type="KEGG" id="ecr:ECIAI1_0874"/>
<dbReference type="HOGENOM" id="CLU_018697_0_0_6"/>
<dbReference type="GO" id="GO:0005829">
    <property type="term" value="C:cytosol"/>
    <property type="evidence" value="ECO:0007669"/>
    <property type="project" value="TreeGrafter"/>
</dbReference>
<dbReference type="GO" id="GO:0051539">
    <property type="term" value="F:4 iron, 4 sulfur cluster binding"/>
    <property type="evidence" value="ECO:0007669"/>
    <property type="project" value="UniProtKB-UniRule"/>
</dbReference>
<dbReference type="GO" id="GO:0035599">
    <property type="term" value="F:aspartic acid methylthiotransferase activity"/>
    <property type="evidence" value="ECO:0007669"/>
    <property type="project" value="TreeGrafter"/>
</dbReference>
<dbReference type="GO" id="GO:0046872">
    <property type="term" value="F:metal ion binding"/>
    <property type="evidence" value="ECO:0007669"/>
    <property type="project" value="UniProtKB-KW"/>
</dbReference>
<dbReference type="GO" id="GO:0103039">
    <property type="term" value="F:protein methylthiotransferase activity"/>
    <property type="evidence" value="ECO:0007669"/>
    <property type="project" value="UniProtKB-EC"/>
</dbReference>
<dbReference type="GO" id="GO:0006400">
    <property type="term" value="P:tRNA modification"/>
    <property type="evidence" value="ECO:0007669"/>
    <property type="project" value="InterPro"/>
</dbReference>
<dbReference type="CDD" id="cd01335">
    <property type="entry name" value="Radical_SAM"/>
    <property type="match status" value="1"/>
</dbReference>
<dbReference type="FunFam" id="2.40.50.140:FF:000060">
    <property type="entry name" value="Ribosomal protein S12 methylthiotransferase RimO"/>
    <property type="match status" value="1"/>
</dbReference>
<dbReference type="FunFam" id="3.40.50.12160:FF:000002">
    <property type="entry name" value="Ribosomal protein S12 methylthiotransferase RimO"/>
    <property type="match status" value="1"/>
</dbReference>
<dbReference type="FunFam" id="3.80.30.20:FF:000001">
    <property type="entry name" value="tRNA-2-methylthio-N(6)-dimethylallyladenosine synthase 2"/>
    <property type="match status" value="1"/>
</dbReference>
<dbReference type="Gene3D" id="3.40.50.12160">
    <property type="entry name" value="Methylthiotransferase, N-terminal domain"/>
    <property type="match status" value="1"/>
</dbReference>
<dbReference type="Gene3D" id="2.40.50.140">
    <property type="entry name" value="Nucleic acid-binding proteins"/>
    <property type="match status" value="1"/>
</dbReference>
<dbReference type="Gene3D" id="3.80.30.20">
    <property type="entry name" value="tm_1862 like domain"/>
    <property type="match status" value="1"/>
</dbReference>
<dbReference type="HAMAP" id="MF_01865">
    <property type="entry name" value="MTTase_RimO"/>
    <property type="match status" value="1"/>
</dbReference>
<dbReference type="InterPro" id="IPR006638">
    <property type="entry name" value="Elp3/MiaA/NifB-like_rSAM"/>
</dbReference>
<dbReference type="InterPro" id="IPR005839">
    <property type="entry name" value="Methylthiotransferase"/>
</dbReference>
<dbReference type="InterPro" id="IPR020612">
    <property type="entry name" value="Methylthiotransferase_CS"/>
</dbReference>
<dbReference type="InterPro" id="IPR013848">
    <property type="entry name" value="Methylthiotransferase_N"/>
</dbReference>
<dbReference type="InterPro" id="IPR038135">
    <property type="entry name" value="Methylthiotransferase_N_sf"/>
</dbReference>
<dbReference type="InterPro" id="IPR012340">
    <property type="entry name" value="NA-bd_OB-fold"/>
</dbReference>
<dbReference type="InterPro" id="IPR005840">
    <property type="entry name" value="Ribosomal_uS12_MeSTrfase_RimO"/>
</dbReference>
<dbReference type="InterPro" id="IPR007197">
    <property type="entry name" value="rSAM"/>
</dbReference>
<dbReference type="InterPro" id="IPR023404">
    <property type="entry name" value="rSAM_horseshoe"/>
</dbReference>
<dbReference type="InterPro" id="IPR002792">
    <property type="entry name" value="TRAM_dom"/>
</dbReference>
<dbReference type="NCBIfam" id="TIGR01125">
    <property type="entry name" value="30S ribosomal protein S12 methylthiotransferase RimO"/>
    <property type="match status" value="1"/>
</dbReference>
<dbReference type="NCBIfam" id="TIGR00089">
    <property type="entry name" value="MiaB/RimO family radical SAM methylthiotransferase"/>
    <property type="match status" value="1"/>
</dbReference>
<dbReference type="PANTHER" id="PTHR43837">
    <property type="entry name" value="RIBOSOMAL PROTEIN S12 METHYLTHIOTRANSFERASE RIMO"/>
    <property type="match status" value="1"/>
</dbReference>
<dbReference type="PANTHER" id="PTHR43837:SF1">
    <property type="entry name" value="RIBOSOMAL PROTEIN US12 METHYLTHIOTRANSFERASE RIMO"/>
    <property type="match status" value="1"/>
</dbReference>
<dbReference type="Pfam" id="PF04055">
    <property type="entry name" value="Radical_SAM"/>
    <property type="match status" value="1"/>
</dbReference>
<dbReference type="Pfam" id="PF18693">
    <property type="entry name" value="TRAM_2"/>
    <property type="match status" value="1"/>
</dbReference>
<dbReference type="Pfam" id="PF00919">
    <property type="entry name" value="UPF0004"/>
    <property type="match status" value="1"/>
</dbReference>
<dbReference type="SFLD" id="SFLDG01082">
    <property type="entry name" value="B12-binding_domain_containing"/>
    <property type="match status" value="1"/>
</dbReference>
<dbReference type="SFLD" id="SFLDS00029">
    <property type="entry name" value="Radical_SAM"/>
    <property type="match status" value="1"/>
</dbReference>
<dbReference type="SFLD" id="SFLDF00274">
    <property type="entry name" value="ribosomal_protein_S12_methylth"/>
    <property type="match status" value="1"/>
</dbReference>
<dbReference type="SMART" id="SM00729">
    <property type="entry name" value="Elp3"/>
    <property type="match status" value="1"/>
</dbReference>
<dbReference type="SUPFAM" id="SSF102114">
    <property type="entry name" value="Radical SAM enzymes"/>
    <property type="match status" value="1"/>
</dbReference>
<dbReference type="PROSITE" id="PS51449">
    <property type="entry name" value="MTTASE_N"/>
    <property type="match status" value="1"/>
</dbReference>
<dbReference type="PROSITE" id="PS01278">
    <property type="entry name" value="MTTASE_RADICAL"/>
    <property type="match status" value="1"/>
</dbReference>
<dbReference type="PROSITE" id="PS51918">
    <property type="entry name" value="RADICAL_SAM"/>
    <property type="match status" value="1"/>
</dbReference>
<dbReference type="PROSITE" id="PS50926">
    <property type="entry name" value="TRAM"/>
    <property type="match status" value="1"/>
</dbReference>
<comment type="function">
    <text evidence="1">Catalyzes the methylthiolation of an aspartic acid residue of ribosomal protein uS12.</text>
</comment>
<comment type="catalytic activity">
    <reaction evidence="1">
        <text>L-aspartate(89)-[ribosomal protein uS12]-hydrogen + (sulfur carrier)-SH + AH2 + 2 S-adenosyl-L-methionine = 3-methylsulfanyl-L-aspartate(89)-[ribosomal protein uS12]-hydrogen + (sulfur carrier)-H + 5'-deoxyadenosine + L-methionine + A + S-adenosyl-L-homocysteine + 2 H(+)</text>
        <dbReference type="Rhea" id="RHEA:37087"/>
        <dbReference type="Rhea" id="RHEA-COMP:10460"/>
        <dbReference type="Rhea" id="RHEA-COMP:10461"/>
        <dbReference type="Rhea" id="RHEA-COMP:14737"/>
        <dbReference type="Rhea" id="RHEA-COMP:14739"/>
        <dbReference type="ChEBI" id="CHEBI:13193"/>
        <dbReference type="ChEBI" id="CHEBI:15378"/>
        <dbReference type="ChEBI" id="CHEBI:17319"/>
        <dbReference type="ChEBI" id="CHEBI:17499"/>
        <dbReference type="ChEBI" id="CHEBI:29917"/>
        <dbReference type="ChEBI" id="CHEBI:29961"/>
        <dbReference type="ChEBI" id="CHEBI:57844"/>
        <dbReference type="ChEBI" id="CHEBI:57856"/>
        <dbReference type="ChEBI" id="CHEBI:59789"/>
        <dbReference type="ChEBI" id="CHEBI:64428"/>
        <dbReference type="ChEBI" id="CHEBI:73599"/>
        <dbReference type="EC" id="2.8.4.4"/>
    </reaction>
</comment>
<comment type="cofactor">
    <cofactor evidence="1">
        <name>[4Fe-4S] cluster</name>
        <dbReference type="ChEBI" id="CHEBI:49883"/>
    </cofactor>
    <text evidence="1">Binds 2 [4Fe-4S] clusters. One cluster is coordinated with 3 cysteines and an exchangeable S-adenosyl-L-methionine.</text>
</comment>
<comment type="subcellular location">
    <subcellularLocation>
        <location evidence="1">Cytoplasm</location>
    </subcellularLocation>
</comment>
<comment type="similarity">
    <text evidence="1">Belongs to the methylthiotransferase family. RimO subfamily.</text>
</comment>
<feature type="chain" id="PRO_0000374830" description="Ribosomal protein uS12 methylthiotransferase RimO">
    <location>
        <begin position="1"/>
        <end position="441"/>
    </location>
</feature>
<feature type="domain" description="MTTase N-terminal" evidence="1">
    <location>
        <begin position="8"/>
        <end position="118"/>
    </location>
</feature>
<feature type="domain" description="Radical SAM core" evidence="2">
    <location>
        <begin position="136"/>
        <end position="373"/>
    </location>
</feature>
<feature type="domain" description="TRAM" evidence="1">
    <location>
        <begin position="376"/>
        <end position="441"/>
    </location>
</feature>
<feature type="binding site" evidence="1">
    <location>
        <position position="17"/>
    </location>
    <ligand>
        <name>[4Fe-4S] cluster</name>
        <dbReference type="ChEBI" id="CHEBI:49883"/>
        <label>1</label>
    </ligand>
</feature>
<feature type="binding site" evidence="1">
    <location>
        <position position="53"/>
    </location>
    <ligand>
        <name>[4Fe-4S] cluster</name>
        <dbReference type="ChEBI" id="CHEBI:49883"/>
        <label>1</label>
    </ligand>
</feature>
<feature type="binding site" evidence="1">
    <location>
        <position position="82"/>
    </location>
    <ligand>
        <name>[4Fe-4S] cluster</name>
        <dbReference type="ChEBI" id="CHEBI:49883"/>
        <label>1</label>
    </ligand>
</feature>
<feature type="binding site" evidence="1">
    <location>
        <position position="150"/>
    </location>
    <ligand>
        <name>[4Fe-4S] cluster</name>
        <dbReference type="ChEBI" id="CHEBI:49883"/>
        <label>2</label>
        <note>4Fe-4S-S-AdoMet</note>
    </ligand>
</feature>
<feature type="binding site" evidence="1">
    <location>
        <position position="154"/>
    </location>
    <ligand>
        <name>[4Fe-4S] cluster</name>
        <dbReference type="ChEBI" id="CHEBI:49883"/>
        <label>2</label>
        <note>4Fe-4S-S-AdoMet</note>
    </ligand>
</feature>
<feature type="binding site" evidence="1">
    <location>
        <position position="157"/>
    </location>
    <ligand>
        <name>[4Fe-4S] cluster</name>
        <dbReference type="ChEBI" id="CHEBI:49883"/>
        <label>2</label>
        <note>4Fe-4S-S-AdoMet</note>
    </ligand>
</feature>
<proteinExistence type="inferred from homology"/>
<organism>
    <name type="scientific">Escherichia coli O8 (strain IAI1)</name>
    <dbReference type="NCBI Taxonomy" id="585034"/>
    <lineage>
        <taxon>Bacteria</taxon>
        <taxon>Pseudomonadati</taxon>
        <taxon>Pseudomonadota</taxon>
        <taxon>Gammaproteobacteria</taxon>
        <taxon>Enterobacterales</taxon>
        <taxon>Enterobacteriaceae</taxon>
        <taxon>Escherichia</taxon>
    </lineage>
</organism>
<keyword id="KW-0004">4Fe-4S</keyword>
<keyword id="KW-0963">Cytoplasm</keyword>
<keyword id="KW-0408">Iron</keyword>
<keyword id="KW-0411">Iron-sulfur</keyword>
<keyword id="KW-0479">Metal-binding</keyword>
<keyword id="KW-0949">S-adenosyl-L-methionine</keyword>
<keyword id="KW-0808">Transferase</keyword>
<name>RIMO_ECO8A</name>
<sequence>MSKVTPQPKIGFVSLGCPKNLVDSERILTELRTEGYDVVPSYDDADMVIVNTCGFIDSAVQESLEAIGEALNENGKVIVTGCLGAKEDQIREVHPKVLEITGPHSYEQVLEHVHHYVPKPKHNPFLSLVPEQGVKLTPRHYAYLKISEGCNHRCTFCIIPSMRGDLVSRPIGEVLSEAKRLVDAGVKEILVISQDTSAYGVDVKHRTGFHNGEPVKTSMVSLCEQLSKLGIWTRLHYVYPYPHVDDVIPLMAEGKILPYLDIPLQHASPRILKLMKRPGSVDRQLARIKQWREICPELTLRSTFIVGFPGETEEDFQMLLDFLKEARLDRVGCFKYSPVEGADANALPDQVPEEVKEERWNRFMQLQQQISAERLQEKVGREILVIIDEVDEEGAIGRSMADAPEIDGAVYLNGETNVKPGDILRVKVEHADEYDLWGSRV</sequence>